<feature type="initiator methionine" description="Removed" evidence="30 31">
    <location>
        <position position="1"/>
    </location>
</feature>
<feature type="chain" id="PRO_0000211401" description="Monocarboxylate transporter 8">
    <location>
        <begin position="2"/>
        <end position="539"/>
    </location>
</feature>
<feature type="topological domain" description="Cytoplasmic" evidence="24">
    <location>
        <begin position="2"/>
        <end position="96"/>
    </location>
</feature>
<feature type="transmembrane region" description="Helical; Name=1" evidence="1">
    <location>
        <begin position="97"/>
        <end position="117"/>
    </location>
</feature>
<feature type="topological domain" description="Extracellular" evidence="24">
    <location>
        <begin position="118"/>
        <end position="143"/>
    </location>
</feature>
<feature type="transmembrane region" description="Helical; Name=2" evidence="1">
    <location>
        <begin position="144"/>
        <end position="164"/>
    </location>
</feature>
<feature type="topological domain" description="Cytoplasmic" evidence="24">
    <location>
        <begin position="165"/>
        <end position="171"/>
    </location>
</feature>
<feature type="transmembrane region" description="Helical; Name=3" evidence="1">
    <location>
        <begin position="172"/>
        <end position="192"/>
    </location>
</feature>
<feature type="topological domain" description="Extracellular" evidence="24">
    <location>
        <begin position="193"/>
        <end position="200"/>
    </location>
</feature>
<feature type="transmembrane region" description="Helical; Name=4" evidence="1">
    <location>
        <begin position="201"/>
        <end position="221"/>
    </location>
</feature>
<feature type="topological domain" description="Cytoplasmic" evidence="24">
    <location>
        <begin position="222"/>
        <end position="229"/>
    </location>
</feature>
<feature type="transmembrane region" description="Helical; Name=5" evidence="1">
    <location>
        <begin position="230"/>
        <end position="250"/>
    </location>
</feature>
<feature type="topological domain" description="Extracellular" evidence="24">
    <location>
        <begin position="251"/>
        <end position="258"/>
    </location>
</feature>
<feature type="transmembrane region" description="Helical; Name=6" evidence="1">
    <location>
        <begin position="259"/>
        <end position="279"/>
    </location>
</feature>
<feature type="topological domain" description="Cytoplasmic" evidence="24">
    <location>
        <begin position="280"/>
        <end position="322"/>
    </location>
</feature>
<feature type="transmembrane region" description="Helical; Name=7" evidence="1">
    <location>
        <begin position="323"/>
        <end position="343"/>
    </location>
</feature>
<feature type="topological domain" description="Extracellular" evidence="24">
    <location>
        <begin position="344"/>
        <end position="356"/>
    </location>
</feature>
<feature type="transmembrane region" description="Helical; Name=8" evidence="1">
    <location>
        <begin position="357"/>
        <end position="377"/>
    </location>
</feature>
<feature type="topological domain" description="Cytoplasmic" evidence="24">
    <location>
        <begin position="378"/>
        <end position="386"/>
    </location>
</feature>
<feature type="transmembrane region" description="Helical; Name=9" evidence="1">
    <location>
        <begin position="387"/>
        <end position="407"/>
    </location>
</feature>
<feature type="topological domain" description="Extracellular" evidence="24">
    <location>
        <begin position="408"/>
        <end position="409"/>
    </location>
</feature>
<feature type="transmembrane region" description="Helical; Name=10" evidence="1">
    <location>
        <begin position="410"/>
        <end position="430"/>
    </location>
</feature>
<feature type="topological domain" description="Cytoplasmic" evidence="24">
    <location>
        <begin position="431"/>
        <end position="447"/>
    </location>
</feature>
<feature type="transmembrane region" description="Helical; Name=11" evidence="1">
    <location>
        <begin position="448"/>
        <end position="468"/>
    </location>
</feature>
<feature type="topological domain" description="Extracellular" evidence="24">
    <location>
        <begin position="469"/>
        <end position="477"/>
    </location>
</feature>
<feature type="transmembrane region" description="Helical; Name=12" evidence="1">
    <location>
        <begin position="478"/>
        <end position="498"/>
    </location>
</feature>
<feature type="topological domain" description="Cytoplasmic" evidence="24">
    <location>
        <begin position="499"/>
        <end position="539"/>
    </location>
</feature>
<feature type="region of interest" description="Disordered" evidence="2">
    <location>
        <begin position="1"/>
        <end position="92"/>
    </location>
</feature>
<feature type="region of interest" description="Disordered" evidence="2">
    <location>
        <begin position="508"/>
        <end position="539"/>
    </location>
</feature>
<feature type="compositionally biased region" description="Acidic residues" evidence="2">
    <location>
        <begin position="31"/>
        <end position="41"/>
    </location>
</feature>
<feature type="compositionally biased region" description="Pro residues" evidence="2">
    <location>
        <begin position="42"/>
        <end position="64"/>
    </location>
</feature>
<feature type="compositionally biased region" description="Basic and acidic residues" evidence="2">
    <location>
        <begin position="508"/>
        <end position="518"/>
    </location>
</feature>
<feature type="modified residue" description="N-acetylalanine" evidence="30 31">
    <location>
        <position position="2"/>
    </location>
</feature>
<feature type="sequence variant" id="VAR_059054" description="In MCT8 deficiency; impaired homodimerization; dbSNP:rs113994162." evidence="5 15">
    <original>S</original>
    <variation>F</variation>
    <location>
        <position position="120"/>
    </location>
</feature>
<feature type="sequence variant" id="VAR_074572" description="In MCT8 deficiency; impaired thyroid hormone transporter activity; does not affect localization to the cell membrane; dbSNP:rs1602140936." evidence="12">
    <original>G</original>
    <variation>R</variation>
    <location>
        <position position="147"/>
    </location>
</feature>
<feature type="sequence variant" id="VAR_074573" description="In MCT8 deficiency; impaired homodimerization; dbSNP:rs373279555." evidence="15">
    <original>A</original>
    <variation>T</variation>
    <location>
        <position position="150"/>
    </location>
</feature>
<feature type="sequence variant" id="VAR_022348" description="In MCT8 deficiency; does not affect homodimerization activity; dbSNP:rs104894936." evidence="4 15 22">
    <original>A</original>
    <variation>V</variation>
    <location>
        <position position="150"/>
    </location>
</feature>
<feature type="sequence variant" id="VAR_059055" description="In MCT8 deficiency; increased homodimerization activity." evidence="5 15">
    <location>
        <position position="156"/>
    </location>
</feature>
<feature type="sequence variant" id="VAR_059056" description="In MCT8 deficiency; increased homodimerization activity." evidence="5 15">
    <original>V</original>
    <variation>M</variation>
    <location>
        <position position="161"/>
    </location>
</feature>
<feature type="sequence variant" id="VAR_074574" description="In MCT8 deficiency; does not affect homodimerization activity; dbSNP:rs727504155." evidence="15 17">
    <original>R</original>
    <variation>H</variation>
    <location>
        <position position="197"/>
    </location>
</feature>
<feature type="sequence variant" id="VAR_074575" description="In MCT8 deficiency; impaired thyroid hormone transporter activity; impaired localization to the cell membrane." evidence="12">
    <original>G</original>
    <variation>C</variation>
    <location>
        <position position="208"/>
    </location>
</feature>
<feature type="sequence variant" id="VAR_075145" description="In MCT8 deficiency; decreased thyroid hormone transport; decreased protein abundance; decreased localization to the plasma membrane; dbSNP:rs398124232." evidence="16">
    <original>S</original>
    <variation>F</variation>
    <location>
        <position position="216"/>
    </location>
</feature>
<feature type="sequence variant" id="VAR_078497" description="In MCT8 deficiency; atypical form; characterized by developmental delay hypotonia and delayed myelination." evidence="14">
    <original>L</original>
    <variation>R</variation>
    <location>
        <position position="217"/>
    </location>
</feature>
<feature type="sequence variant" id="VAR_074576" description="In MCT8 deficiency; impaired thyroid hormone transporter activity; does not affect localization to the cell membrane." evidence="12">
    <original>P</original>
    <variation>L</variation>
    <location>
        <position position="247"/>
    </location>
</feature>
<feature type="sequence variant" id="VAR_057723" description="In dbSNP:rs12849411.">
    <original>I</original>
    <variation>L</variation>
    <location>
        <position position="323"/>
    </location>
</feature>
<feature type="sequence variant" id="VAR_059057" description="In MCT8 deficiency; impaired homodimerization; dbSNP:rs104894939." evidence="5 15">
    <original>L</original>
    <variation>W</variation>
    <location>
        <position position="360"/>
    </location>
</feature>
<feature type="sequence variant" id="VAR_074577" description="In MCT8 deficiency; impaired homodimerization; dbSNP:rs587784384." evidence="15">
    <original>R</original>
    <variation>C</variation>
    <location>
        <position position="371"/>
    </location>
</feature>
<feature type="sequence variant" id="VAR_074578" description="In MCT8 deficiency; impaired thyroid hormone transporter activity; does not affect localization to the cell membrane." evidence="12">
    <original>D</original>
    <variation>V</variation>
    <location>
        <position position="379"/>
    </location>
</feature>
<feature type="sequence variant" id="VAR_022349" description="In MCT8 deficiency; does not affect homodimerization activity; dbSNP:rs122455132." evidence="4 15">
    <original>L</original>
    <variation>P</variation>
    <location>
        <position position="397"/>
    </location>
</feature>
<feature type="sequence variant" id="VAR_059058" description="In MCT8 deficiency; dbSNP:rs113994164." evidence="8">
    <location>
        <position position="427"/>
    </location>
</feature>
<feature type="sequence variant" id="VAR_022350" description="In MCT8 deficiency; does not affect homodimerization activity; dbSNP:rs104894931." evidence="3 15">
    <original>L</original>
    <variation>P</variation>
    <location>
        <position position="438"/>
    </location>
</feature>
<feature type="sequence variant" id="VAR_074579" description="In MCT8 deficiency; impaired thyroid hormone transporter activity; does not affect localization to the cell membrane; dbSNP:rs2147871919." evidence="12">
    <original>P</original>
    <variation>L</variation>
    <location>
        <position position="463"/>
    </location>
</feature>
<feature type="sequence variant" id="VAR_074580" description="In MCT8 deficiency; does not affect homodimerization activity; impaired thyroid hormone transporter activity; impaired localization to the cell membrane." evidence="12 15">
    <original>G</original>
    <variation>D</variation>
    <location>
        <position position="484"/>
    </location>
</feature>
<feature type="sequence variant" id="VAR_078498" description="In MCT8 deficiency; results in a mild clinical phenotype; retains some residual thyroid hormone transporter activity." evidence="17">
    <original>G</original>
    <variation>E</variation>
    <location>
        <position position="490"/>
    </location>
</feature>
<feature type="sequence variant" id="VAR_059059" description="In MCT8 deficiency; loss of thyroid hormone transport; dbSNP:rs794727799." evidence="8 17">
    <original>G</original>
    <variation>R</variation>
    <location>
        <position position="490"/>
    </location>
</feature>
<feature type="sequence variant" id="VAR_059060" description="In MCT8 deficiency; does not affect homodimerization activity; dbSNP:rs104894938." evidence="5 15">
    <original>L</original>
    <variation>P</variation>
    <location>
        <position position="494"/>
    </location>
</feature>
<feature type="mutagenesis site" description="Reduction of thyroid hormone (TH) transport." evidence="13">
    <original>H</original>
    <variation>A</variation>
    <location>
        <position position="118"/>
    </location>
</feature>
<feature type="mutagenesis site" description="Does not alter kinetic characteristics of thyroid hormone (TH) transport." evidence="19">
    <original>H</original>
    <variation>Q</variation>
    <location>
        <position position="118"/>
    </location>
</feature>
<feature type="mutagenesis site" description="No effect on thyroid hormone (TH) transport." evidence="13">
    <original>H</original>
    <variation>A</variation>
    <location>
        <position position="186"/>
    </location>
</feature>
<feature type="mutagenesis site" description="No effect on thyroid hormone transport. No effect on protein abundance. No effect on protein localization to the plasma membrane." evidence="16">
    <original>S</original>
    <variation>A</variation>
    <location>
        <position position="216"/>
    </location>
</feature>
<feature type="mutagenesis site" description="Does not affect localization to the cell membrane. Abolishes T3 uptake activity." evidence="11">
    <original>R</original>
    <variation>A</variation>
    <location>
        <position position="371"/>
    </location>
</feature>
<feature type="mutagenesis site" description="No effect on thyroid hormone (TH) transport." evidence="13">
    <original>H</original>
    <variation>A</variation>
    <location>
        <position position="376"/>
    </location>
</feature>
<feature type="mutagenesis site" description="Does not affect localization to the cell membrane. Abolishes T3 uptake activity." evidence="11">
    <original>D</original>
    <variation>A</variation>
    <location>
        <position position="424"/>
    </location>
</feature>
<feature type="mutagenesis site" description="No effect on thyroid hormone (TH) transport." evidence="17">
    <original>G</original>
    <variation>A</variation>
    <location>
        <position position="490"/>
    </location>
</feature>
<keyword id="KW-0007">Acetylation</keyword>
<keyword id="KW-1003">Cell membrane</keyword>
<keyword id="KW-0225">Disease variant</keyword>
<keyword id="KW-0472">Membrane</keyword>
<keyword id="KW-1267">Proteomics identification</keyword>
<keyword id="KW-1185">Reference proteome</keyword>
<keyword id="KW-0812">Transmembrane</keyword>
<keyword id="KW-1133">Transmembrane helix</keyword>
<keyword id="KW-0813">Transport</keyword>
<comment type="function">
    <text evidence="6 7 11 12 16 17 18 19 26">Specific thyroid hormone transmembrane transporter, that mediates both uptake and efflux of thyroid hormones across the cell membrane independently of pH or a Na(+) gradient. Major substrates are the iodothyronines T3 and T4 and to a lesser extent rT3 and 3,3-diiodothyronine (3,3'-T2) (PubMed:16887882, PubMed:18337592, PubMed:20628049, PubMed:23550058, PubMed:26426690, PubMed:27805744, PubMed:31436139). Acts as an important mediator of thyroid hormone transport, especially T3, through the blood-brain barrier (Probable) (PubMed:28526555).</text>
</comment>
<comment type="catalytic activity">
    <reaction evidence="6 7 11 12 13 16 17 19">
        <text>3,3',5-triiodo-L-thyronine(out) = 3,3',5-triiodo-L-thyronine(in)</text>
        <dbReference type="Rhea" id="RHEA:71811"/>
        <dbReference type="ChEBI" id="CHEBI:533015"/>
    </reaction>
    <physiologicalReaction direction="left-to-right" evidence="25 27">
        <dbReference type="Rhea" id="RHEA:71812"/>
    </physiologicalReaction>
    <physiologicalReaction direction="right-to-left" evidence="25">
        <dbReference type="Rhea" id="RHEA:71813"/>
    </physiologicalReaction>
</comment>
<comment type="catalytic activity">
    <reaction evidence="6 7 11 12 13 16 17 19">
        <text>L-thyroxine(out) = L-thyroxine(in)</text>
        <dbReference type="Rhea" id="RHEA:71819"/>
        <dbReference type="ChEBI" id="CHEBI:58448"/>
    </reaction>
    <physiologicalReaction direction="left-to-right" evidence="25">
        <dbReference type="Rhea" id="RHEA:71820"/>
    </physiologicalReaction>
    <physiologicalReaction direction="right-to-left" evidence="25">
        <dbReference type="Rhea" id="RHEA:71821"/>
    </physiologicalReaction>
</comment>
<comment type="catalytic activity">
    <reaction evidence="6 11 19">
        <text>3,3',5'-triiodo-L-thyronine(out) = 3,3',5'-triiodo-L-thyronine(in)</text>
        <dbReference type="Rhea" id="RHEA:71815"/>
        <dbReference type="ChEBI" id="CHEBI:57261"/>
    </reaction>
    <physiologicalReaction direction="left-to-right" evidence="28">
        <dbReference type="Rhea" id="RHEA:71816"/>
    </physiologicalReaction>
    <physiologicalReaction direction="right-to-left" evidence="28">
        <dbReference type="Rhea" id="RHEA:71817"/>
    </physiologicalReaction>
</comment>
<comment type="catalytic activity">
    <reaction evidence="6 11 19">
        <text>3,3'-diiodo-L-thyronine(out) = 3,3'-diiodo-L-thyronine(in)</text>
        <dbReference type="Rhea" id="RHEA:71823"/>
        <dbReference type="ChEBI" id="CHEBI:176514"/>
    </reaction>
    <physiologicalReaction direction="left-to-right" evidence="28">
        <dbReference type="Rhea" id="RHEA:71824"/>
    </physiologicalReaction>
    <physiologicalReaction direction="right-to-left" evidence="28">
        <dbReference type="Rhea" id="RHEA:71825"/>
    </physiologicalReaction>
</comment>
<comment type="subunit">
    <text evidence="10 15">Monomer (PubMed:19797118). Homodimer (PubMed:19797118, PubMed:25527620). Homooligomer (PubMed:19797118).</text>
</comment>
<comment type="subcellular location">
    <subcellularLocation>
        <location evidence="11 12 15 16">Cell membrane</location>
        <topology evidence="1">Multi-pass membrane protein</topology>
    </subcellularLocation>
    <subcellularLocation>
        <location evidence="9">Apical cell membrane</location>
        <topology evidence="1">Multi-pass membrane protein</topology>
    </subcellularLocation>
</comment>
<comment type="tissue specificity">
    <text evidence="9 20 21">Highly expressed in liver and heart (PubMed:7981683). In adult brain tissue expression is largely confined to endothelial cells of the blood-brain barrier (at protein level) (PubMed:18687783, PubMed:32143555).</text>
</comment>
<comment type="disease" evidence="3 4 5 8 12 14 15 16 17 22">
    <disease id="DI-01993">
        <name>Monocarboxylate transporter 8 deficiency</name>
        <acronym>MCT8 deficiency</acronym>
        <description>Consists of a severe form of X-linked psychomotor retardation combined with abnormal thyroid hormone (TH) levels. Thyroid hormone deficiency can be caused by defects of hormone synthesis and action, but it has also been linked to a defect in cellular hormone transport. Affected patients are males with abnormal relative concentrations of three circulating iodothyronines, as well as severe neurological abnormalities, including global developmental delay, central hypotonia, spastic quadriplegia, dystonic movements, rotary nystagmus, and impaired gaze and hearing. Heterozygous females had a milder thyroid phenotype and no neurological defects.</description>
        <dbReference type="MIM" id="300523"/>
    </disease>
    <text>The disease is caused by variants affecting the gene represented in this entry.</text>
</comment>
<comment type="miscellaneous">
    <text evidence="8">Abnormal brain development associated with MCT8 deficiency may be the consequence of either decreased or increased intracellular T3 concentrations.</text>
</comment>
<comment type="similarity">
    <text evidence="24">Belongs to the major facilitator superfamily. Monocarboxylate porter (TC 2.A.1.13) family.</text>
</comment>
<comment type="sequence caution" evidence="24">
    <conflict type="erroneous initiation">
        <sequence resource="EMBL-CDS" id="AAB60374"/>
    </conflict>
    <text>Extended N-terminus.</text>
</comment>
<comment type="sequence caution" evidence="24">
    <conflict type="erroneous gene model prediction">
        <sequence resource="EMBL-CDS" id="AAB60375"/>
    </conflict>
</comment>
<gene>
    <name type="primary">SLC16A2</name>
    <name evidence="29" type="synonym">MCT7</name>
    <name type="synonym">MCT8</name>
    <name evidence="23" type="synonym">XPCT</name>
</gene>
<accession>P36021</accession>
<accession>Q7Z797</accession>
<evidence type="ECO:0000255" key="1"/>
<evidence type="ECO:0000256" key="2">
    <source>
        <dbReference type="SAM" id="MobiDB-lite"/>
    </source>
</evidence>
<evidence type="ECO:0000269" key="3">
    <source>
    </source>
</evidence>
<evidence type="ECO:0000269" key="4">
    <source>
    </source>
</evidence>
<evidence type="ECO:0000269" key="5">
    <source>
    </source>
</evidence>
<evidence type="ECO:0000269" key="6">
    <source>
    </source>
</evidence>
<evidence type="ECO:0000269" key="7">
    <source>
    </source>
</evidence>
<evidence type="ECO:0000269" key="8">
    <source>
    </source>
</evidence>
<evidence type="ECO:0000269" key="9">
    <source>
    </source>
</evidence>
<evidence type="ECO:0000269" key="10">
    <source>
    </source>
</evidence>
<evidence type="ECO:0000269" key="11">
    <source>
    </source>
</evidence>
<evidence type="ECO:0000269" key="12">
    <source>
    </source>
</evidence>
<evidence type="ECO:0000269" key="13">
    <source>
    </source>
</evidence>
<evidence type="ECO:0000269" key="14">
    <source>
    </source>
</evidence>
<evidence type="ECO:0000269" key="15">
    <source>
    </source>
</evidence>
<evidence type="ECO:0000269" key="16">
    <source>
    </source>
</evidence>
<evidence type="ECO:0000269" key="17">
    <source>
    </source>
</evidence>
<evidence type="ECO:0000269" key="18">
    <source>
    </source>
</evidence>
<evidence type="ECO:0000269" key="19">
    <source>
    </source>
</evidence>
<evidence type="ECO:0000269" key="20">
    <source>
    </source>
</evidence>
<evidence type="ECO:0000269" key="21">
    <source>
    </source>
</evidence>
<evidence type="ECO:0000269" key="22">
    <source ref="10"/>
</evidence>
<evidence type="ECO:0000303" key="23">
    <source>
    </source>
</evidence>
<evidence type="ECO:0000305" key="24"/>
<evidence type="ECO:0000305" key="25">
    <source>
    </source>
</evidence>
<evidence type="ECO:0000305" key="26">
    <source>
    </source>
</evidence>
<evidence type="ECO:0000305" key="27">
    <source>
    </source>
</evidence>
<evidence type="ECO:0000305" key="28">
    <source>
    </source>
</evidence>
<evidence type="ECO:0000312" key="29">
    <source>
        <dbReference type="HGNC" id="HGNC:10923"/>
    </source>
</evidence>
<evidence type="ECO:0007744" key="30">
    <source>
    </source>
</evidence>
<evidence type="ECO:0007744" key="31">
    <source>
    </source>
</evidence>
<protein>
    <recommendedName>
        <fullName>Monocarboxylate transporter 8</fullName>
        <shortName>MCT 8</shortName>
    </recommendedName>
    <alternativeName>
        <fullName>Monocarboxylate transporter 7</fullName>
        <shortName>MCT 7</shortName>
    </alternativeName>
    <alternativeName>
        <fullName>Solute carrier family 16 member 2</fullName>
    </alternativeName>
    <alternativeName>
        <fullName>X-linked PEST-containing transporter</fullName>
    </alternativeName>
</protein>
<organism>
    <name type="scientific">Homo sapiens</name>
    <name type="common">Human</name>
    <dbReference type="NCBI Taxonomy" id="9606"/>
    <lineage>
        <taxon>Eukaryota</taxon>
        <taxon>Metazoa</taxon>
        <taxon>Chordata</taxon>
        <taxon>Craniata</taxon>
        <taxon>Vertebrata</taxon>
        <taxon>Euteleostomi</taxon>
        <taxon>Mammalia</taxon>
        <taxon>Eutheria</taxon>
        <taxon>Euarchontoglires</taxon>
        <taxon>Primates</taxon>
        <taxon>Haplorrhini</taxon>
        <taxon>Catarrhini</taxon>
        <taxon>Hominidae</taxon>
        <taxon>Homo</taxon>
    </lineage>
</organism>
<sequence length="539" mass="59511">MALQSQASEEAKGPWQEADQEQQEPVGSPEPESEPEPEPEPEPVPVPPPEPQPEPQPLPDPAPLPELEFESERVHEPEPTPTVETRGTARGFQPPEGGFGWVVVFAATWCNGSIFGIHNSVGILYSMLLEEEKEKNRQVEFQAAWVGALAMGMIFFCSPIVSIFTDRLGCRITATAGAAVAFIGLHTSSFTSSLSLRYFTYGILFGCGCSFAFQPSLVILGHYFQRRLGLANGVVSAGSSIFSMSFPFLIRMLGDKIKLAQTFQVLSTFMFVLMLLSLTYRPLLPSSQDTPSKRGVRTLHQRFLAQLRKYFNMRVFRQRTYRIWAFGIAAAALGYFVPYVHLMKYVEEEFSEIKETWVLLVCIGATSGLGRLVSGHISDSIPGLKKIYLQVLSFLLLGLMSMMIPLCRDFGGLIVVCLFLGLCDGFFITIMAPIAFELVGPMQASQAIGYLLGMMALPMIAGPPIAGLLRNCFGDYHVAFYFAGVPPIIGAVILFFVPLMHQRMFKKEQRDSSKDKMLAPDPDPNGELLPGSPNPEEPI</sequence>
<proteinExistence type="evidence at protein level"/>
<reference key="1">
    <citation type="journal article" date="1994" name="Hum. Mol. Genet.">
        <title>A novel transmembrane transporter encoded by the XPCT gene in Xq13.2.</title>
        <authorList>
            <person name="Lafreniere R.G."/>
            <person name="Carrel L."/>
            <person name="Willard H.F."/>
        </authorList>
    </citation>
    <scope>NUCLEOTIDE SEQUENCE [GENOMIC DNA / MRNA]</scope>
    <scope>TISSUE SPECIFICITY</scope>
</reference>
<reference key="2">
    <citation type="submission" date="2002-05" db="EMBL/GenBank/DDBJ databases">
        <title>X-linked PEST-containing transporter (XPCT) identified in the X-chromosome inactivation center is an acidic amino acid transporter which requires CD147 for its functional expression.</title>
        <authorList>
            <person name="Kim D."/>
            <person name="Kanai Y."/>
            <person name="Choi H."/>
            <person name="Shin H."/>
            <person name="Kim J."/>
            <person name="Teraoka H."/>
            <person name="Shigeta Y."/>
            <person name="Chairoungdua A."/>
            <person name="Babu E."/>
            <person name="Anzai N."/>
            <person name="Iribe Y."/>
            <person name="Endou H."/>
        </authorList>
    </citation>
    <scope>NUCLEOTIDE SEQUENCE [MRNA]</scope>
</reference>
<reference key="3">
    <citation type="journal article" date="2005" name="Nature">
        <title>The DNA sequence of the human X chromosome.</title>
        <authorList>
            <person name="Ross M.T."/>
            <person name="Grafham D.V."/>
            <person name="Coffey A.J."/>
            <person name="Scherer S."/>
            <person name="McLay K."/>
            <person name="Muzny D."/>
            <person name="Platzer M."/>
            <person name="Howell G.R."/>
            <person name="Burrows C."/>
            <person name="Bird C.P."/>
            <person name="Frankish A."/>
            <person name="Lovell F.L."/>
            <person name="Howe K.L."/>
            <person name="Ashurst J.L."/>
            <person name="Fulton R.S."/>
            <person name="Sudbrak R."/>
            <person name="Wen G."/>
            <person name="Jones M.C."/>
            <person name="Hurles M.E."/>
            <person name="Andrews T.D."/>
            <person name="Scott C.E."/>
            <person name="Searle S."/>
            <person name="Ramser J."/>
            <person name="Whittaker A."/>
            <person name="Deadman R."/>
            <person name="Carter N.P."/>
            <person name="Hunt S.E."/>
            <person name="Chen R."/>
            <person name="Cree A."/>
            <person name="Gunaratne P."/>
            <person name="Havlak P."/>
            <person name="Hodgson A."/>
            <person name="Metzker M.L."/>
            <person name="Richards S."/>
            <person name="Scott G."/>
            <person name="Steffen D."/>
            <person name="Sodergren E."/>
            <person name="Wheeler D.A."/>
            <person name="Worley K.C."/>
            <person name="Ainscough R."/>
            <person name="Ambrose K.D."/>
            <person name="Ansari-Lari M.A."/>
            <person name="Aradhya S."/>
            <person name="Ashwell R.I."/>
            <person name="Babbage A.K."/>
            <person name="Bagguley C.L."/>
            <person name="Ballabio A."/>
            <person name="Banerjee R."/>
            <person name="Barker G.E."/>
            <person name="Barlow K.F."/>
            <person name="Barrett I.P."/>
            <person name="Bates K.N."/>
            <person name="Beare D.M."/>
            <person name="Beasley H."/>
            <person name="Beasley O."/>
            <person name="Beck A."/>
            <person name="Bethel G."/>
            <person name="Blechschmidt K."/>
            <person name="Brady N."/>
            <person name="Bray-Allen S."/>
            <person name="Bridgeman A.M."/>
            <person name="Brown A.J."/>
            <person name="Brown M.J."/>
            <person name="Bonnin D."/>
            <person name="Bruford E.A."/>
            <person name="Buhay C."/>
            <person name="Burch P."/>
            <person name="Burford D."/>
            <person name="Burgess J."/>
            <person name="Burrill W."/>
            <person name="Burton J."/>
            <person name="Bye J.M."/>
            <person name="Carder C."/>
            <person name="Carrel L."/>
            <person name="Chako J."/>
            <person name="Chapman J.C."/>
            <person name="Chavez D."/>
            <person name="Chen E."/>
            <person name="Chen G."/>
            <person name="Chen Y."/>
            <person name="Chen Z."/>
            <person name="Chinault C."/>
            <person name="Ciccodicola A."/>
            <person name="Clark S.Y."/>
            <person name="Clarke G."/>
            <person name="Clee C.M."/>
            <person name="Clegg S."/>
            <person name="Clerc-Blankenburg K."/>
            <person name="Clifford K."/>
            <person name="Cobley V."/>
            <person name="Cole C.G."/>
            <person name="Conquer J.S."/>
            <person name="Corby N."/>
            <person name="Connor R.E."/>
            <person name="David R."/>
            <person name="Davies J."/>
            <person name="Davis C."/>
            <person name="Davis J."/>
            <person name="Delgado O."/>
            <person name="Deshazo D."/>
            <person name="Dhami P."/>
            <person name="Ding Y."/>
            <person name="Dinh H."/>
            <person name="Dodsworth S."/>
            <person name="Draper H."/>
            <person name="Dugan-Rocha S."/>
            <person name="Dunham A."/>
            <person name="Dunn M."/>
            <person name="Durbin K.J."/>
            <person name="Dutta I."/>
            <person name="Eades T."/>
            <person name="Ellwood M."/>
            <person name="Emery-Cohen A."/>
            <person name="Errington H."/>
            <person name="Evans K.L."/>
            <person name="Faulkner L."/>
            <person name="Francis F."/>
            <person name="Frankland J."/>
            <person name="Fraser A.E."/>
            <person name="Galgoczy P."/>
            <person name="Gilbert J."/>
            <person name="Gill R."/>
            <person name="Gloeckner G."/>
            <person name="Gregory S.G."/>
            <person name="Gribble S."/>
            <person name="Griffiths C."/>
            <person name="Grocock R."/>
            <person name="Gu Y."/>
            <person name="Gwilliam R."/>
            <person name="Hamilton C."/>
            <person name="Hart E.A."/>
            <person name="Hawes A."/>
            <person name="Heath P.D."/>
            <person name="Heitmann K."/>
            <person name="Hennig S."/>
            <person name="Hernandez J."/>
            <person name="Hinzmann B."/>
            <person name="Ho S."/>
            <person name="Hoffs M."/>
            <person name="Howden P.J."/>
            <person name="Huckle E.J."/>
            <person name="Hume J."/>
            <person name="Hunt P.J."/>
            <person name="Hunt A.R."/>
            <person name="Isherwood J."/>
            <person name="Jacob L."/>
            <person name="Johnson D."/>
            <person name="Jones S."/>
            <person name="de Jong P.J."/>
            <person name="Joseph S.S."/>
            <person name="Keenan S."/>
            <person name="Kelly S."/>
            <person name="Kershaw J.K."/>
            <person name="Khan Z."/>
            <person name="Kioschis P."/>
            <person name="Klages S."/>
            <person name="Knights A.J."/>
            <person name="Kosiura A."/>
            <person name="Kovar-Smith C."/>
            <person name="Laird G.K."/>
            <person name="Langford C."/>
            <person name="Lawlor S."/>
            <person name="Leversha M."/>
            <person name="Lewis L."/>
            <person name="Liu W."/>
            <person name="Lloyd C."/>
            <person name="Lloyd D.M."/>
            <person name="Loulseged H."/>
            <person name="Loveland J.E."/>
            <person name="Lovell J.D."/>
            <person name="Lozado R."/>
            <person name="Lu J."/>
            <person name="Lyne R."/>
            <person name="Ma J."/>
            <person name="Maheshwari M."/>
            <person name="Matthews L.H."/>
            <person name="McDowall J."/>
            <person name="McLaren S."/>
            <person name="McMurray A."/>
            <person name="Meidl P."/>
            <person name="Meitinger T."/>
            <person name="Milne S."/>
            <person name="Miner G."/>
            <person name="Mistry S.L."/>
            <person name="Morgan M."/>
            <person name="Morris S."/>
            <person name="Mueller I."/>
            <person name="Mullikin J.C."/>
            <person name="Nguyen N."/>
            <person name="Nordsiek G."/>
            <person name="Nyakatura G."/>
            <person name="O'dell C.N."/>
            <person name="Okwuonu G."/>
            <person name="Palmer S."/>
            <person name="Pandian R."/>
            <person name="Parker D."/>
            <person name="Parrish J."/>
            <person name="Pasternak S."/>
            <person name="Patel D."/>
            <person name="Pearce A.V."/>
            <person name="Pearson D.M."/>
            <person name="Pelan S.E."/>
            <person name="Perez L."/>
            <person name="Porter K.M."/>
            <person name="Ramsey Y."/>
            <person name="Reichwald K."/>
            <person name="Rhodes S."/>
            <person name="Ridler K.A."/>
            <person name="Schlessinger D."/>
            <person name="Schueler M.G."/>
            <person name="Sehra H.K."/>
            <person name="Shaw-Smith C."/>
            <person name="Shen H."/>
            <person name="Sheridan E.M."/>
            <person name="Shownkeen R."/>
            <person name="Skuce C.D."/>
            <person name="Smith M.L."/>
            <person name="Sotheran E.C."/>
            <person name="Steingruber H.E."/>
            <person name="Steward C.A."/>
            <person name="Storey R."/>
            <person name="Swann R.M."/>
            <person name="Swarbreck D."/>
            <person name="Tabor P.E."/>
            <person name="Taudien S."/>
            <person name="Taylor T."/>
            <person name="Teague B."/>
            <person name="Thomas K."/>
            <person name="Thorpe A."/>
            <person name="Timms K."/>
            <person name="Tracey A."/>
            <person name="Trevanion S."/>
            <person name="Tromans A.C."/>
            <person name="d'Urso M."/>
            <person name="Verduzco D."/>
            <person name="Villasana D."/>
            <person name="Waldron L."/>
            <person name="Wall M."/>
            <person name="Wang Q."/>
            <person name="Warren J."/>
            <person name="Warry G.L."/>
            <person name="Wei X."/>
            <person name="West A."/>
            <person name="Whitehead S.L."/>
            <person name="Whiteley M.N."/>
            <person name="Wilkinson J.E."/>
            <person name="Willey D.L."/>
            <person name="Williams G."/>
            <person name="Williams L."/>
            <person name="Williamson A."/>
            <person name="Williamson H."/>
            <person name="Wilming L."/>
            <person name="Woodmansey R.L."/>
            <person name="Wray P.W."/>
            <person name="Yen J."/>
            <person name="Zhang J."/>
            <person name="Zhou J."/>
            <person name="Zoghbi H."/>
            <person name="Zorilla S."/>
            <person name="Buck D."/>
            <person name="Reinhardt R."/>
            <person name="Poustka A."/>
            <person name="Rosenthal A."/>
            <person name="Lehrach H."/>
            <person name="Meindl A."/>
            <person name="Minx P.J."/>
            <person name="Hillier L.W."/>
            <person name="Willard H.F."/>
            <person name="Wilson R.K."/>
            <person name="Waterston R.H."/>
            <person name="Rice C.M."/>
            <person name="Vaudin M."/>
            <person name="Coulson A."/>
            <person name="Nelson D.L."/>
            <person name="Weinstock G."/>
            <person name="Sulston J.E."/>
            <person name="Durbin R.M."/>
            <person name="Hubbard T."/>
            <person name="Gibbs R.A."/>
            <person name="Beck S."/>
            <person name="Rogers J."/>
            <person name="Bentley D.R."/>
        </authorList>
    </citation>
    <scope>NUCLEOTIDE SEQUENCE [LARGE SCALE GENOMIC DNA]</scope>
</reference>
<reference key="4">
    <citation type="journal article" date="2006" name="Mol. Endocrinol.">
        <title>Thyroid hormone transport by the human monocarboxylate transporter 8 and its rate-limiting role in intracellular metabolism.</title>
        <authorList>
            <person name="Friesema E.C."/>
            <person name="Kuiper G.G."/>
            <person name="Jansen J."/>
            <person name="Visser T.J."/>
            <person name="Kester M.H."/>
        </authorList>
    </citation>
    <scope>TRANSPORTER ACTIVITY</scope>
    <scope>FUNCTION</scope>
</reference>
<reference key="5">
    <citation type="journal article" date="2008" name="Endocrinology">
        <title>Expression of the thyroid hormone transporters monocarboxylate transporter-8 (SLC16A2) and organic ion transporter-14 (SLCO1C1) at the blood-brain barrier.</title>
        <authorList>
            <person name="Roberts L.M."/>
            <person name="Woodford K."/>
            <person name="Zhou M."/>
            <person name="Black D.S."/>
            <person name="Haggerty J.E."/>
            <person name="Tate E.H."/>
            <person name="Grindstaff K.K."/>
            <person name="Mengesha W."/>
            <person name="Raman C."/>
            <person name="Zerangue N."/>
        </authorList>
    </citation>
    <scope>SUBCELLULAR LOCATION</scope>
    <scope>TISSUE SPECIFICITY</scope>
</reference>
<reference key="6">
    <citation type="journal article" date="2009" name="Anal. Chem.">
        <title>Lys-N and trypsin cover complementary parts of the phosphoproteome in a refined SCX-based approach.</title>
        <authorList>
            <person name="Gauci S."/>
            <person name="Helbig A.O."/>
            <person name="Slijper M."/>
            <person name="Krijgsveld J."/>
            <person name="Heck A.J."/>
            <person name="Mohammed S."/>
        </authorList>
    </citation>
    <scope>ACETYLATION [LARGE SCALE ANALYSIS] AT ALA-2</scope>
    <scope>CLEAVAGE OF INITIATOR METHIONINE [LARGE SCALE ANALYSIS]</scope>
    <scope>IDENTIFICATION BY MASS SPECTROMETRY [LARGE SCALE ANALYSIS]</scope>
</reference>
<reference key="7">
    <citation type="journal article" date="2009" name="Endocrinology">
        <title>Evidence for a homodimeric structure of human monocarboxylate transporter 8.</title>
        <authorList>
            <person name="Visser W.E."/>
            <person name="Philp N.J."/>
            <person name="van Dijk T.B."/>
            <person name="Klootwijk W."/>
            <person name="Friesema E.C."/>
            <person name="Jansen J."/>
            <person name="Beesley P.W."/>
            <person name="Ianculescu A.G."/>
            <person name="Visser T.J."/>
        </authorList>
    </citation>
    <scope>SUBUNIT</scope>
</reference>
<reference key="8">
    <citation type="journal article" date="2012" name="Mol. Cell. Proteomics">
        <title>Comparative large-scale characterisation of plant vs. mammal proteins reveals similar and idiosyncratic N-alpha acetylation features.</title>
        <authorList>
            <person name="Bienvenut W.V."/>
            <person name="Sumpton D."/>
            <person name="Martinez A."/>
            <person name="Lilla S."/>
            <person name="Espagne C."/>
            <person name="Meinnel T."/>
            <person name="Giglione C."/>
        </authorList>
    </citation>
    <scope>ACETYLATION [LARGE SCALE ANALYSIS] AT ALA-2</scope>
    <scope>CLEAVAGE OF INITIATOR METHIONINE [LARGE SCALE ANALYSIS]</scope>
    <scope>IDENTIFICATION BY MASS SPECTROMETRY [LARGE SCALE ANALYSIS]</scope>
</reference>
<reference key="9">
    <citation type="journal article" date="2013" name="Endocrinology">
        <title>Importance of His192 in the human thyroid hormone transporter MCT8 for substrate recognition.</title>
        <authorList>
            <person name="Groeneweg S."/>
            <person name="Lima de Souza E.C."/>
            <person name="Visser W.E."/>
            <person name="Peeters R.P."/>
            <person name="Visser T.J."/>
        </authorList>
    </citation>
    <scope>FUNCTION</scope>
    <scope>TRANSPORTER ACTIVITY</scope>
    <scope>MUTAGENESIS OF HIS-118; HIS-186 AND HIS-376</scope>
</reference>
<reference key="10">
    <citation type="journal article" date="2003" name="Thyroid">
        <title>Mutations in a thyroid hormone transporter in patients with severe psychomotor retardation and high serum T3 levels.</title>
        <authorList>
            <person name="Friesema E."/>
            <person name="Grueters A."/>
            <person name="Halestrap A."/>
            <person name="Reeser M."/>
            <person name="Visser T."/>
        </authorList>
    </citation>
    <scope>VARIANT MCT8 DEFICIENCY VAL-150</scope>
</reference>
<reference key="11">
    <citation type="journal article" date="2004" name="Am. J. Hum. Genet.">
        <title>A novel syndrome combining thyroid and neurological abnormalities is associated with mutations in a monocarboxylate transporter gene.</title>
        <authorList>
            <person name="Dumitrescu A.M."/>
            <person name="Liao X.-H."/>
            <person name="Best T.B."/>
            <person name="Brockmann K."/>
            <person name="Refetoff S."/>
        </authorList>
    </citation>
    <scope>VARIANT MCT8 DEFICIENCY PRO-438</scope>
</reference>
<reference key="12">
    <citation type="journal article" date="2004" name="Am. J. Hum. Genet.">
        <authorList>
            <person name="Dumitrescu A.M."/>
            <person name="Liao X.-H."/>
            <person name="Best T.B."/>
            <person name="Brockmann K."/>
            <person name="Refetoff S."/>
        </authorList>
    </citation>
    <scope>ERRATUM OF PUBMED:14661163</scope>
</reference>
<reference key="13">
    <citation type="journal article" date="2008" name="Eur. J. Hum. Genet.">
        <title>MCT8 mutation analysis and identification of the first female with Allan-Herndon-Dudley syndrome due to loss of MCT8 expression.</title>
        <authorList>
            <person name="Frints S.G."/>
            <person name="Lenzner S."/>
            <person name="Bauters M."/>
            <person name="Jensen L.R."/>
            <person name="Van Esch H."/>
            <person name="des Portes V."/>
            <person name="Moog U."/>
            <person name="Macville M.V."/>
            <person name="van Roozendaal K."/>
            <person name="Schrander-Stumpel C.T."/>
            <person name="Tzschach A."/>
            <person name="Marynen P."/>
            <person name="Fryns J.P."/>
            <person name="Hamel B."/>
            <person name="van Bokhoven H."/>
            <person name="Chelly J."/>
            <person name="Beldjord C."/>
            <person name="Turner G."/>
            <person name="Gecz J."/>
            <person name="Moraine C."/>
            <person name="Raynaud M."/>
            <person name="Ropers H.H."/>
            <person name="Froyen G."/>
            <person name="Kuss A.W."/>
        </authorList>
    </citation>
    <scope>IDENTIFICATION OF START CODON</scope>
</reference>
<reference key="14">
    <citation type="journal article" date="2008" name="Mol. Endocrinol.">
        <title>Effective cellular uptake and efflux of thyroid hormone by human monocarboxylate transporter 10.</title>
        <authorList>
            <person name="Friesema E.C."/>
            <person name="Jansen J."/>
            <person name="Jachtenberg J.W."/>
            <person name="Visser W.E."/>
            <person name="Kester M.H."/>
            <person name="Visser T.J."/>
        </authorList>
    </citation>
    <scope>FUNCTION</scope>
    <scope>TRANSPORTER ACTIVITY</scope>
</reference>
<reference key="15">
    <citation type="journal article" date="2010" name="J. Biol. Chem.">
        <title>Essential molecular determinants for thyroid hormone transport and first structural implications for monocarboxylate transporter 8.</title>
        <authorList>
            <person name="Kinne A."/>
            <person name="Kleinau G."/>
            <person name="Hoefig C.S."/>
            <person name="Grueters A."/>
            <person name="Koehrle J."/>
            <person name="Krause G."/>
            <person name="Schweizer U."/>
        </authorList>
    </citation>
    <scope>FUNCTION</scope>
    <scope>TRANSPORTER ACTIVITY</scope>
    <scope>SUBCELLULAR LOCATION</scope>
    <scope>MUTAGENESIS OF ARG-371 AND ASP-424</scope>
</reference>
<reference key="16">
    <citation type="journal article" date="2020" name="Thyroid">
        <title>Spatiotemporal changes of cerebral monocarboxylate transporter 8 expression.</title>
        <authorList>
            <person name="Wilpert N.M."/>
            <person name="Krueger M."/>
            <person name="Opitz R."/>
            <person name="Sebinger D."/>
            <person name="Paisdzior S."/>
            <person name="Mages B."/>
            <person name="Schulz A."/>
            <person name="Spranger J."/>
            <person name="Wirth E.K."/>
            <person name="Stachelscheid H."/>
            <person name="Mergenthaler P."/>
            <person name="Vajkoczy P."/>
            <person name="Krude H."/>
            <person name="Kuehnen P."/>
            <person name="Bechmann I."/>
            <person name="Biebermann H."/>
        </authorList>
    </citation>
    <scope>TISSUE SPECIFICITY</scope>
</reference>
<reference key="17">
    <citation type="journal article" date="2004" name="Lancet">
        <title>Association between mutations in a thyroid hormone transporter and severe X-linked psychomotor retardation.</title>
        <authorList>
            <person name="Friesema E.C.H."/>
            <person name="Grueters A."/>
            <person name="Biebermann H."/>
            <person name="Krude H."/>
            <person name="von Moers A."/>
            <person name="Reeser M."/>
            <person name="Barrett T.G."/>
            <person name="Mancilla E.E."/>
            <person name="Svensson J."/>
            <person name="Kester M.H.A."/>
            <person name="Kuiper G.G.J.M."/>
            <person name="Balkassmi S."/>
            <person name="Uitterlinden A.G."/>
            <person name="Koehrle J."/>
            <person name="Rodien P."/>
            <person name="Halestrap A.P."/>
            <person name="Visser T.J."/>
        </authorList>
    </citation>
    <scope>VARIANTS MCT8 DEFICIENCY VAL-150 AND PRO-397</scope>
</reference>
<reference key="18">
    <citation type="journal article" date="2005" name="Am. J. Hum. Genet.">
        <title>Allan-Herndon-Dudley syndrome and the monocarboxylate transporter 8 (MCT8) gene.</title>
        <authorList>
            <person name="Schwartz C.E."/>
            <person name="May M.M."/>
            <person name="Carpenter N.J."/>
            <person name="Rogers R.C."/>
            <person name="Martin J."/>
            <person name="Bialer M.G."/>
            <person name="Ward J."/>
            <person name="Sanabria J."/>
            <person name="Marsa S."/>
            <person name="Lewis J.A."/>
            <person name="Echeverri R."/>
            <person name="Lubs H.A."/>
            <person name="Voeller K."/>
            <person name="Simensen R.J."/>
            <person name="Stevenson R.E."/>
        </authorList>
    </citation>
    <scope>VARIANTS MCT8 DEFICIENCY PHE-120; PHE-156 DEL; MET-161; TRP-360 AND PRO-494</scope>
</reference>
<reference key="19">
    <citation type="journal article" date="2009" name="Hum. Mutat.">
        <title>Novel pathogenic mechanism suggested by ex vivo analysis of MCT8 (SLC16A2) mutations.</title>
        <authorList>
            <person name="Visser W.E."/>
            <person name="Jansen J."/>
            <person name="Friesema E.C.H."/>
            <person name="Kester M.H.A."/>
            <person name="Mancilla E."/>
            <person name="Lundgren J."/>
            <person name="van der Knaap M.S."/>
            <person name="Lunsing R.J."/>
            <person name="Brouwer O.F."/>
            <person name="Visser T.J."/>
        </authorList>
    </citation>
    <scope>VARIANTS MCT8 DEFICIENCY PHE-427 DEL AND ARG-490</scope>
    <scope>POSSIBLE PATHOGENIC MECHANISM OF BRAIN DEVELOPMENT</scope>
</reference>
<reference key="20">
    <citation type="journal article" date="2013" name="Mol. Endocrinol.">
        <title>Mutations in MCT8 in patients with Allan-Herndon-Dudley-syndrome affecting its cellular distribution.</title>
        <authorList>
            <person name="Kersseboom S."/>
            <person name="Kremers G.J."/>
            <person name="Friesema E.C."/>
            <person name="Visser W.E."/>
            <person name="Klootwijk W."/>
            <person name="Peeters R.P."/>
            <person name="Visser T.J."/>
        </authorList>
    </citation>
    <scope>FUNCTION</scope>
    <scope>TRANSPORTER ACTIVITY</scope>
    <scope>SUBCELLULAR LOCATION</scope>
    <scope>VARIANTS MCT8 DEFICIENCY ARG-147; CYS-208; LEU-247; VAL-379; LEU-463 AND ASP-484</scope>
    <scope>CHARACTERIZATION OF VARIANTS MCT8 DEFICIENCY ARG-147; CYS-208; LEU-247; VAL-379; LEU-463 AND ASP-484</scope>
</reference>
<reference key="21">
    <citation type="journal article" date="2015" name="J. Child Neurol.">
        <title>Myelination delay and Allan-Herndon-Dudley syndrome caused by a novel mutation in the SLC16A2 gene.</title>
        <authorList>
            <person name="La Piana R."/>
            <person name="Vanasse M."/>
            <person name="Brais B."/>
            <person name="Bernard G."/>
        </authorList>
    </citation>
    <scope>INVOLVEMENT IN MCT8 DEFICIENCY</scope>
    <scope>VARIANT MCT8 DEFICIENCY ARG-217</scope>
</reference>
<reference key="22">
    <citation type="journal article" date="2015" name="PLoS ONE">
        <title>Further insights into the Allan-Herndon-Dudley syndrome: clinical and functional characterization of a novel MCT8 mutation.</title>
        <authorList>
            <person name="Armour C.M."/>
            <person name="Kersseboom S."/>
            <person name="Yoon G."/>
            <person name="Visser T.J."/>
        </authorList>
    </citation>
    <scope>FUNCTION</scope>
    <scope>TRANSPORTER ACTIVITY</scope>
    <scope>VARIANT MCT8 DEFICIENCY PHE-216</scope>
    <scope>CHARACTERIZATION OF VARIANT MCT8 DEFICIENCY PHE-216</scope>
    <scope>MUTAGENESIS OF SER-216</scope>
    <scope>SUBCELLULAR LOCATION</scope>
</reference>
<reference key="23">
    <citation type="journal article" date="2015" name="J. Mol. Endocrinol.">
        <title>Modulation of monocarboxylate transporter 8 oligomerization by specific pathogenic mutations.</title>
        <authorList>
            <person name="Fischer J."/>
            <person name="Kleinau G."/>
            <person name="Mueller A."/>
            <person name="Kuehnen P."/>
            <person name="Zwanziger D."/>
            <person name="Kinne A."/>
            <person name="Rehders M."/>
            <person name="Moeller L.C."/>
            <person name="Fuehrer D."/>
            <person name="Grueters A."/>
            <person name="Krude H."/>
            <person name="Brix K."/>
            <person name="Biebermann H."/>
        </authorList>
    </citation>
    <scope>VARIANTS MCT8 DEFICIENCY THR-150; HIS-197; CYS-371 AND ASP-484</scope>
    <scope>CHARACTERIZATION OF VARIANTS MCT8 DEFICIENCY PHE-120; THR-150; VAL-150; PHE-156 DEL; MET-161; HIS-197; TRP-360; CYS-371 PRO-397; PRO-438; ASP-484 AND PRO-494</scope>
    <scope>SUBUNIT</scope>
    <scope>SUBCELLULAR LOCATION</scope>
</reference>
<reference key="24">
    <citation type="journal article" date="2017" name="Hum. Mutat.">
        <title>Clinical and Molecular Characteristics of SLC16A2 (MCT8) Mutations in Three Families with the Allan-Herndon-Dudley Syndrome.</title>
        <authorList>
            <person name="Novara F."/>
            <person name="Groeneweg S."/>
            <person name="Freri E."/>
            <person name="Estienne M."/>
            <person name="Reho P."/>
            <person name="Matricardi S."/>
            <person name="Castellotti B."/>
            <person name="Visser W.E."/>
            <person name="Zuffardi O."/>
            <person name="Visser T.J."/>
        </authorList>
    </citation>
    <scope>VARIANTS MCT8 DEFICIENCY HIS-197; ARG-490 AND GLU-490</scope>
    <scope>CHARACTERIZATION OF VARIANTS MCT8 DEFICIENCY ARG-490 AND GLU-490</scope>
    <scope>MUTAGENESIS OF GLY-490</scope>
    <scope>FUNCTION</scope>
    <scope>TRANSPORTER ACTIVITY</scope>
</reference>
<reference key="25">
    <citation type="journal article" date="2017" name="Cell Stem Cell">
        <title>Modeling psychomotor retardation using iPSCs from MCT8-deficient patients indicates a prominent role for the blood-brain barrier.</title>
        <authorList>
            <person name="Vatine G.D."/>
            <person name="Al-Ahmad A."/>
            <person name="Barriga B.K."/>
            <person name="Svendsen S."/>
            <person name="Salim A."/>
            <person name="Garcia L."/>
            <person name="Garcia V.J."/>
            <person name="Ho R."/>
            <person name="Yucer N."/>
            <person name="Qian T."/>
            <person name="Lim R.G."/>
            <person name="Wu J."/>
            <person name="Thompson L.M."/>
            <person name="Spivia W.R."/>
            <person name="Chen Z."/>
            <person name="Van Eyk J."/>
            <person name="Palecek S.P."/>
            <person name="Refetoff S."/>
            <person name="Shusta E.V."/>
            <person name="Svendsen C.N."/>
        </authorList>
    </citation>
    <scope>FUNCTION</scope>
</reference>
<reference key="26">
    <citation type="journal article" date="2019" name="Thyroid">
        <title>In Vitro Characterization of Human, Mouse, and Zebrafish MCT8 Orthologues.</title>
        <authorList>
            <person name="Groeneweg S."/>
            <person name="Kersseboom S."/>
            <person name="van den Berge A."/>
            <person name="Dolcetta-Capuzzo A."/>
            <person name="van Geest F.S."/>
            <person name="van Heerebeek R.E.A."/>
            <person name="Arjona F.J."/>
            <person name="Meima M.E."/>
            <person name="Peeters R.P."/>
            <person name="Visser W.E."/>
            <person name="Visser T.J."/>
        </authorList>
    </citation>
    <scope>FUNCTION</scope>
    <scope>TRANSPORTER ACTIVITY</scope>
    <scope>MUTAGENESIS OF HIS-118</scope>
</reference>
<dbReference type="EMBL" id="U05321">
    <property type="protein sequence ID" value="AAB60375.1"/>
    <property type="status" value="ALT_SEQ"/>
    <property type="molecule type" value="Genomic_DNA"/>
</dbReference>
<dbReference type="EMBL" id="U05316">
    <property type="protein sequence ID" value="AAB60375.1"/>
    <property type="status" value="JOINED"/>
    <property type="molecule type" value="Genomic_DNA"/>
</dbReference>
<dbReference type="EMBL" id="U05317">
    <property type="protein sequence ID" value="AAB60375.1"/>
    <property type="status" value="JOINED"/>
    <property type="molecule type" value="Genomic_DNA"/>
</dbReference>
<dbReference type="EMBL" id="U05318">
    <property type="protein sequence ID" value="AAB60375.1"/>
    <property type="status" value="JOINED"/>
    <property type="molecule type" value="Genomic_DNA"/>
</dbReference>
<dbReference type="EMBL" id="U05319">
    <property type="protein sequence ID" value="AAB60375.1"/>
    <property type="status" value="JOINED"/>
    <property type="molecule type" value="Genomic_DNA"/>
</dbReference>
<dbReference type="EMBL" id="U05320">
    <property type="protein sequence ID" value="AAB60375.1"/>
    <property type="status" value="JOINED"/>
    <property type="molecule type" value="Genomic_DNA"/>
</dbReference>
<dbReference type="EMBL" id="U05315">
    <property type="protein sequence ID" value="AAB60374.1"/>
    <property type="status" value="ALT_INIT"/>
    <property type="molecule type" value="mRNA"/>
</dbReference>
<dbReference type="EMBL" id="AB085789">
    <property type="protein sequence ID" value="BAC76827.1"/>
    <property type="molecule type" value="mRNA"/>
</dbReference>
<dbReference type="EMBL" id="AC004073">
    <property type="status" value="NOT_ANNOTATED_CDS"/>
    <property type="molecule type" value="Genomic_DNA"/>
</dbReference>
<dbReference type="EMBL" id="AL157934">
    <property type="status" value="NOT_ANNOTATED_CDS"/>
    <property type="molecule type" value="Genomic_DNA"/>
</dbReference>
<dbReference type="CCDS" id="CCDS14426.2"/>
<dbReference type="PIR" id="I39295">
    <property type="entry name" value="I39295"/>
</dbReference>
<dbReference type="RefSeq" id="NP_006508.2">
    <property type="nucleotide sequence ID" value="NM_006517.5"/>
</dbReference>
<dbReference type="SMR" id="P36021"/>
<dbReference type="BioGRID" id="112455">
    <property type="interactions" value="49"/>
</dbReference>
<dbReference type="CORUM" id="P36021"/>
<dbReference type="FunCoup" id="P36021">
    <property type="interactions" value="456"/>
</dbReference>
<dbReference type="IntAct" id="P36021">
    <property type="interactions" value="6"/>
</dbReference>
<dbReference type="STRING" id="9606.ENSP00000465734"/>
<dbReference type="DrugBank" id="DB00149">
    <property type="generic name" value="Leucine"/>
</dbReference>
<dbReference type="DrugBank" id="DB00451">
    <property type="generic name" value="Levothyroxine"/>
</dbReference>
<dbReference type="DrugBank" id="DB01583">
    <property type="generic name" value="Liotrix"/>
</dbReference>
<dbReference type="DrugBank" id="DB00119">
    <property type="generic name" value="Pyruvic acid"/>
</dbReference>
<dbReference type="DrugBank" id="DB09100">
    <property type="generic name" value="Thyroid, porcine"/>
</dbReference>
<dbReference type="DrugBank" id="DB00150">
    <property type="generic name" value="Tryptophan"/>
</dbReference>
<dbReference type="DrugBank" id="DB00135">
    <property type="generic name" value="Tyrosine"/>
</dbReference>
<dbReference type="TCDB" id="2.A.1.13.10">
    <property type="family name" value="the major facilitator superfamily (mfs)"/>
</dbReference>
<dbReference type="GlyGen" id="P36021">
    <property type="glycosylation" value="1 site"/>
</dbReference>
<dbReference type="iPTMnet" id="P36021"/>
<dbReference type="PhosphoSitePlus" id="P36021"/>
<dbReference type="SwissPalm" id="P36021"/>
<dbReference type="BioMuta" id="SLC16A2"/>
<dbReference type="DMDM" id="114152841"/>
<dbReference type="jPOST" id="P36021"/>
<dbReference type="MassIVE" id="P36021"/>
<dbReference type="PaxDb" id="9606-ENSP00000465734"/>
<dbReference type="PeptideAtlas" id="P36021"/>
<dbReference type="ProteomicsDB" id="55173"/>
<dbReference type="Pumba" id="P36021"/>
<dbReference type="Antibodypedia" id="522">
    <property type="antibodies" value="179 antibodies from 30 providers"/>
</dbReference>
<dbReference type="DNASU" id="6567"/>
<dbReference type="Ensembl" id="ENST00000587091.6">
    <property type="protein sequence ID" value="ENSP00000465734.1"/>
    <property type="gene ID" value="ENSG00000147100.11"/>
</dbReference>
<dbReference type="GeneID" id="6567"/>
<dbReference type="KEGG" id="hsa:6567"/>
<dbReference type="MANE-Select" id="ENST00000587091.6">
    <property type="protein sequence ID" value="ENSP00000465734.1"/>
    <property type="RefSeq nucleotide sequence ID" value="NM_006517.5"/>
    <property type="RefSeq protein sequence ID" value="NP_006508.2"/>
</dbReference>
<dbReference type="UCSC" id="uc031tjy.2">
    <property type="organism name" value="human"/>
</dbReference>
<dbReference type="AGR" id="HGNC:10923"/>
<dbReference type="CTD" id="6567"/>
<dbReference type="DisGeNET" id="6567"/>
<dbReference type="GeneCards" id="SLC16A2"/>
<dbReference type="GeneReviews" id="SLC16A2"/>
<dbReference type="HGNC" id="HGNC:10923">
    <property type="gene designation" value="SLC16A2"/>
</dbReference>
<dbReference type="HPA" id="ENSG00000147100">
    <property type="expression patterns" value="Tissue enhanced (liver)"/>
</dbReference>
<dbReference type="MalaCards" id="SLC16A2"/>
<dbReference type="MIM" id="300095">
    <property type="type" value="gene"/>
</dbReference>
<dbReference type="MIM" id="300523">
    <property type="type" value="phenotype"/>
</dbReference>
<dbReference type="neXtProt" id="NX_P36021"/>
<dbReference type="OpenTargets" id="ENSG00000147100"/>
<dbReference type="Orphanet" id="59">
    <property type="disease" value="Allan-Herndon-Dudley syndrome"/>
</dbReference>
<dbReference type="PharmGKB" id="PA35814"/>
<dbReference type="VEuPathDB" id="HostDB:ENSG00000147100"/>
<dbReference type="eggNOG" id="KOG2504">
    <property type="taxonomic scope" value="Eukaryota"/>
</dbReference>
<dbReference type="GeneTree" id="ENSGT00940000159450"/>
<dbReference type="HOGENOM" id="CLU_001265_59_5_1"/>
<dbReference type="InParanoid" id="P36021"/>
<dbReference type="OMA" id="AWCNGSI"/>
<dbReference type="OrthoDB" id="6499973at2759"/>
<dbReference type="PAN-GO" id="P36021">
    <property type="GO annotations" value="3 GO annotations based on evolutionary models"/>
</dbReference>
<dbReference type="PhylomeDB" id="P36021"/>
<dbReference type="TreeFam" id="TF313792"/>
<dbReference type="PathwayCommons" id="P36021"/>
<dbReference type="Reactome" id="R-HSA-879518">
    <property type="pathway name" value="Transport of organic anions"/>
</dbReference>
<dbReference type="SignaLink" id="P36021"/>
<dbReference type="SIGNOR" id="P36021"/>
<dbReference type="BioGRID-ORCS" id="6567">
    <property type="hits" value="11 hits in 768 CRISPR screens"/>
</dbReference>
<dbReference type="ChiTaRS" id="SLC16A2">
    <property type="organism name" value="human"/>
</dbReference>
<dbReference type="GeneWiki" id="SLC16A2"/>
<dbReference type="GenomeRNAi" id="6567"/>
<dbReference type="Pharos" id="P36021">
    <property type="development level" value="Tbio"/>
</dbReference>
<dbReference type="PRO" id="PR:P36021"/>
<dbReference type="Proteomes" id="UP000005640">
    <property type="component" value="Chromosome X"/>
</dbReference>
<dbReference type="RNAct" id="P36021">
    <property type="molecule type" value="protein"/>
</dbReference>
<dbReference type="Bgee" id="ENSG00000147100">
    <property type="expression patterns" value="Expressed in right adrenal gland and 117 other cell types or tissues"/>
</dbReference>
<dbReference type="ExpressionAtlas" id="P36021">
    <property type="expression patterns" value="baseline and differential"/>
</dbReference>
<dbReference type="GO" id="GO:0016324">
    <property type="term" value="C:apical plasma membrane"/>
    <property type="evidence" value="ECO:0000314"/>
    <property type="project" value="ARUK-UCL"/>
</dbReference>
<dbReference type="GO" id="GO:0005886">
    <property type="term" value="C:plasma membrane"/>
    <property type="evidence" value="ECO:0000314"/>
    <property type="project" value="UniProtKB"/>
</dbReference>
<dbReference type="GO" id="GO:0015171">
    <property type="term" value="F:amino acid transmembrane transporter activity"/>
    <property type="evidence" value="ECO:0000314"/>
    <property type="project" value="ARUK-UCL"/>
</dbReference>
<dbReference type="GO" id="GO:0042802">
    <property type="term" value="F:identical protein binding"/>
    <property type="evidence" value="ECO:0000314"/>
    <property type="project" value="UniProtKB"/>
</dbReference>
<dbReference type="GO" id="GO:0008028">
    <property type="term" value="F:monocarboxylic acid transmembrane transporter activity"/>
    <property type="evidence" value="ECO:0000304"/>
    <property type="project" value="ProtInc"/>
</dbReference>
<dbReference type="GO" id="GO:0015349">
    <property type="term" value="F:thyroid hormone transmembrane transporter activity"/>
    <property type="evidence" value="ECO:0000314"/>
    <property type="project" value="ARUK-UCL"/>
</dbReference>
<dbReference type="GO" id="GO:0089718">
    <property type="term" value="P:amino acid import across plasma membrane"/>
    <property type="evidence" value="ECO:0000314"/>
    <property type="project" value="ARUK-UCL"/>
</dbReference>
<dbReference type="GO" id="GO:0006520">
    <property type="term" value="P:amino acid metabolic process"/>
    <property type="evidence" value="ECO:0000316"/>
    <property type="project" value="ARUK-UCL"/>
</dbReference>
<dbReference type="GO" id="GO:0015718">
    <property type="term" value="P:monocarboxylic acid transport"/>
    <property type="evidence" value="ECO:0000304"/>
    <property type="project" value="ProtInc"/>
</dbReference>
<dbReference type="GO" id="GO:2000178">
    <property type="term" value="P:negative regulation of neural precursor cell proliferation"/>
    <property type="evidence" value="ECO:0000315"/>
    <property type="project" value="ARUK-UCL"/>
</dbReference>
<dbReference type="GO" id="GO:0006590">
    <property type="term" value="P:thyroid hormone generation"/>
    <property type="evidence" value="ECO:0007669"/>
    <property type="project" value="Ensembl"/>
</dbReference>
<dbReference type="GO" id="GO:0042403">
    <property type="term" value="P:thyroid hormone metabolic process"/>
    <property type="evidence" value="ECO:0000316"/>
    <property type="project" value="ARUK-UCL"/>
</dbReference>
<dbReference type="GO" id="GO:0070327">
    <property type="term" value="P:thyroid hormone transport"/>
    <property type="evidence" value="ECO:0000314"/>
    <property type="project" value="ARUK-UCL"/>
</dbReference>
<dbReference type="GO" id="GO:0070460">
    <property type="term" value="P:thyroid-stimulating hormone secretion"/>
    <property type="evidence" value="ECO:0007669"/>
    <property type="project" value="Ensembl"/>
</dbReference>
<dbReference type="GO" id="GO:0150104">
    <property type="term" value="P:transport across blood-brain barrier"/>
    <property type="evidence" value="ECO:0000315"/>
    <property type="project" value="ARUK-UCL"/>
</dbReference>
<dbReference type="CDD" id="cd17420">
    <property type="entry name" value="MFS_MCT8_10"/>
    <property type="match status" value="1"/>
</dbReference>
<dbReference type="FunFam" id="1.20.1250.20:FF:000156">
    <property type="entry name" value="monocarboxylate transporter 8 isoform X1"/>
    <property type="match status" value="1"/>
</dbReference>
<dbReference type="FunFam" id="1.20.1250.20:FF:000179">
    <property type="entry name" value="Solute carrier family 16 member 2"/>
    <property type="match status" value="1"/>
</dbReference>
<dbReference type="Gene3D" id="1.20.1250.20">
    <property type="entry name" value="MFS general substrate transporter like domains"/>
    <property type="match status" value="2"/>
</dbReference>
<dbReference type="InterPro" id="IPR011701">
    <property type="entry name" value="MFS"/>
</dbReference>
<dbReference type="InterPro" id="IPR020846">
    <property type="entry name" value="MFS_dom"/>
</dbReference>
<dbReference type="InterPro" id="IPR036259">
    <property type="entry name" value="MFS_trans_sf"/>
</dbReference>
<dbReference type="InterPro" id="IPR050327">
    <property type="entry name" value="Proton-linked_MCT"/>
</dbReference>
<dbReference type="PANTHER" id="PTHR11360">
    <property type="entry name" value="MONOCARBOXYLATE TRANSPORTER"/>
    <property type="match status" value="1"/>
</dbReference>
<dbReference type="PANTHER" id="PTHR11360:SF123">
    <property type="entry name" value="MONOCARBOXYLATE TRANSPORTER 8"/>
    <property type="match status" value="1"/>
</dbReference>
<dbReference type="Pfam" id="PF07690">
    <property type="entry name" value="MFS_1"/>
    <property type="match status" value="1"/>
</dbReference>
<dbReference type="SUPFAM" id="SSF103473">
    <property type="entry name" value="MFS general substrate transporter"/>
    <property type="match status" value="1"/>
</dbReference>
<dbReference type="PROSITE" id="PS50850">
    <property type="entry name" value="MFS"/>
    <property type="match status" value="1"/>
</dbReference>
<name>MOT8_HUMAN</name>